<protein>
    <recommendedName>
        <fullName evidence="1">Small ribosomal subunit protein uS13</fullName>
    </recommendedName>
    <alternativeName>
        <fullName evidence="3">30S ribosomal protein S13</fullName>
    </alternativeName>
</protein>
<feature type="chain" id="PRO_1000086246" description="Small ribosomal subunit protein uS13">
    <location>
        <begin position="1"/>
        <end position="124"/>
    </location>
</feature>
<feature type="region of interest" description="Disordered" evidence="2">
    <location>
        <begin position="97"/>
        <end position="124"/>
    </location>
</feature>
<gene>
    <name evidence="1" type="primary">rpsM</name>
    <name type="ordered locus">Mflv_4973</name>
</gene>
<accession>A4TEI2</accession>
<evidence type="ECO:0000255" key="1">
    <source>
        <dbReference type="HAMAP-Rule" id="MF_01315"/>
    </source>
</evidence>
<evidence type="ECO:0000256" key="2">
    <source>
        <dbReference type="SAM" id="MobiDB-lite"/>
    </source>
</evidence>
<evidence type="ECO:0000305" key="3"/>
<keyword id="KW-0687">Ribonucleoprotein</keyword>
<keyword id="KW-0689">Ribosomal protein</keyword>
<keyword id="KW-0694">RNA-binding</keyword>
<keyword id="KW-0699">rRNA-binding</keyword>
<keyword id="KW-0820">tRNA-binding</keyword>
<comment type="function">
    <text evidence="1">Located at the top of the head of the 30S subunit, it contacts several helices of the 16S rRNA. In the 70S ribosome it contacts the 23S rRNA (bridge B1a) and protein L5 of the 50S subunit (bridge B1b), connecting the 2 subunits; these bridges are implicated in subunit movement. Contacts the tRNAs in the A and P-sites.</text>
</comment>
<comment type="subunit">
    <text evidence="1">Part of the 30S ribosomal subunit. Forms a loose heterodimer with protein S19. Forms two bridges to the 50S subunit in the 70S ribosome.</text>
</comment>
<comment type="similarity">
    <text evidence="1">Belongs to the universal ribosomal protein uS13 family.</text>
</comment>
<proteinExistence type="inferred from homology"/>
<name>RS13_MYCGI</name>
<dbReference type="EMBL" id="CP000656">
    <property type="protein sequence ID" value="ABP47439.1"/>
    <property type="molecule type" value="Genomic_DNA"/>
</dbReference>
<dbReference type="SMR" id="A4TEI2"/>
<dbReference type="STRING" id="350054.Mflv_4973"/>
<dbReference type="KEGG" id="mgi:Mflv_4973"/>
<dbReference type="eggNOG" id="COG0099">
    <property type="taxonomic scope" value="Bacteria"/>
</dbReference>
<dbReference type="HOGENOM" id="CLU_103849_1_2_11"/>
<dbReference type="OrthoDB" id="9803610at2"/>
<dbReference type="GO" id="GO:0005829">
    <property type="term" value="C:cytosol"/>
    <property type="evidence" value="ECO:0007669"/>
    <property type="project" value="TreeGrafter"/>
</dbReference>
<dbReference type="GO" id="GO:0015935">
    <property type="term" value="C:small ribosomal subunit"/>
    <property type="evidence" value="ECO:0007669"/>
    <property type="project" value="TreeGrafter"/>
</dbReference>
<dbReference type="GO" id="GO:0019843">
    <property type="term" value="F:rRNA binding"/>
    <property type="evidence" value="ECO:0007669"/>
    <property type="project" value="UniProtKB-UniRule"/>
</dbReference>
<dbReference type="GO" id="GO:0003735">
    <property type="term" value="F:structural constituent of ribosome"/>
    <property type="evidence" value="ECO:0007669"/>
    <property type="project" value="InterPro"/>
</dbReference>
<dbReference type="GO" id="GO:0000049">
    <property type="term" value="F:tRNA binding"/>
    <property type="evidence" value="ECO:0007669"/>
    <property type="project" value="UniProtKB-UniRule"/>
</dbReference>
<dbReference type="GO" id="GO:0006412">
    <property type="term" value="P:translation"/>
    <property type="evidence" value="ECO:0007669"/>
    <property type="project" value="UniProtKB-UniRule"/>
</dbReference>
<dbReference type="FunFam" id="1.10.8.50:FF:000001">
    <property type="entry name" value="30S ribosomal protein S13"/>
    <property type="match status" value="1"/>
</dbReference>
<dbReference type="FunFam" id="4.10.910.10:FF:000001">
    <property type="entry name" value="30S ribosomal protein S13"/>
    <property type="match status" value="1"/>
</dbReference>
<dbReference type="Gene3D" id="1.10.8.50">
    <property type="match status" value="1"/>
</dbReference>
<dbReference type="Gene3D" id="4.10.910.10">
    <property type="entry name" value="30s ribosomal protein s13, domain 2"/>
    <property type="match status" value="1"/>
</dbReference>
<dbReference type="HAMAP" id="MF_01315">
    <property type="entry name" value="Ribosomal_uS13"/>
    <property type="match status" value="1"/>
</dbReference>
<dbReference type="InterPro" id="IPR027437">
    <property type="entry name" value="Rbsml_uS13_C"/>
</dbReference>
<dbReference type="InterPro" id="IPR001892">
    <property type="entry name" value="Ribosomal_uS13"/>
</dbReference>
<dbReference type="InterPro" id="IPR010979">
    <property type="entry name" value="Ribosomal_uS13-like_H2TH"/>
</dbReference>
<dbReference type="InterPro" id="IPR019980">
    <property type="entry name" value="Ribosomal_uS13_bac-type"/>
</dbReference>
<dbReference type="InterPro" id="IPR018269">
    <property type="entry name" value="Ribosomal_uS13_CS"/>
</dbReference>
<dbReference type="NCBIfam" id="TIGR03631">
    <property type="entry name" value="uS13_bact"/>
    <property type="match status" value="1"/>
</dbReference>
<dbReference type="PANTHER" id="PTHR10871">
    <property type="entry name" value="30S RIBOSOMAL PROTEIN S13/40S RIBOSOMAL PROTEIN S18"/>
    <property type="match status" value="1"/>
</dbReference>
<dbReference type="PANTHER" id="PTHR10871:SF1">
    <property type="entry name" value="SMALL RIBOSOMAL SUBUNIT PROTEIN US13M"/>
    <property type="match status" value="1"/>
</dbReference>
<dbReference type="Pfam" id="PF00416">
    <property type="entry name" value="Ribosomal_S13"/>
    <property type="match status" value="1"/>
</dbReference>
<dbReference type="PIRSF" id="PIRSF002134">
    <property type="entry name" value="Ribosomal_S13"/>
    <property type="match status" value="1"/>
</dbReference>
<dbReference type="SUPFAM" id="SSF46946">
    <property type="entry name" value="S13-like H2TH domain"/>
    <property type="match status" value="1"/>
</dbReference>
<dbReference type="PROSITE" id="PS00646">
    <property type="entry name" value="RIBOSOMAL_S13_1"/>
    <property type="match status" value="1"/>
</dbReference>
<dbReference type="PROSITE" id="PS50159">
    <property type="entry name" value="RIBOSOMAL_S13_2"/>
    <property type="match status" value="1"/>
</dbReference>
<reference key="1">
    <citation type="submission" date="2007-04" db="EMBL/GenBank/DDBJ databases">
        <title>Complete sequence of chromosome of Mycobacterium gilvum PYR-GCK.</title>
        <authorList>
            <consortium name="US DOE Joint Genome Institute"/>
            <person name="Copeland A."/>
            <person name="Lucas S."/>
            <person name="Lapidus A."/>
            <person name="Barry K."/>
            <person name="Detter J.C."/>
            <person name="Glavina del Rio T."/>
            <person name="Hammon N."/>
            <person name="Israni S."/>
            <person name="Dalin E."/>
            <person name="Tice H."/>
            <person name="Pitluck S."/>
            <person name="Chain P."/>
            <person name="Malfatti S."/>
            <person name="Shin M."/>
            <person name="Vergez L."/>
            <person name="Schmutz J."/>
            <person name="Larimer F."/>
            <person name="Land M."/>
            <person name="Hauser L."/>
            <person name="Kyrpides N."/>
            <person name="Mikhailova N."/>
            <person name="Miller C."/>
            <person name="Richardson P."/>
        </authorList>
    </citation>
    <scope>NUCLEOTIDE SEQUENCE [LARGE SCALE GENOMIC DNA]</scope>
    <source>
        <strain>PYR-GCK</strain>
    </source>
</reference>
<sequence length="124" mass="14321">MARLMGVDLPRDKRMEIALTYIYGVGRTRSQEILEATGISRDQRTKDLTDDQVSQLRDYIEGNLKVEGDLRREVQADIRRKIEIGCYQGLRHRRGLPVRGQRTKTNARTRKGPKRTIAGKKKAR</sequence>
<organism>
    <name type="scientific">Mycolicibacterium gilvum (strain PYR-GCK)</name>
    <name type="common">Mycobacterium gilvum (strain PYR-GCK)</name>
    <dbReference type="NCBI Taxonomy" id="350054"/>
    <lineage>
        <taxon>Bacteria</taxon>
        <taxon>Bacillati</taxon>
        <taxon>Actinomycetota</taxon>
        <taxon>Actinomycetes</taxon>
        <taxon>Mycobacteriales</taxon>
        <taxon>Mycobacteriaceae</taxon>
        <taxon>Mycolicibacterium</taxon>
    </lineage>
</organism>